<organism>
    <name type="scientific">Saccharomyces cerevisiae (strain ATCC 204508 / S288c)</name>
    <name type="common">Baker's yeast</name>
    <dbReference type="NCBI Taxonomy" id="559292"/>
    <lineage>
        <taxon>Eukaryota</taxon>
        <taxon>Fungi</taxon>
        <taxon>Dikarya</taxon>
        <taxon>Ascomycota</taxon>
        <taxon>Saccharomycotina</taxon>
        <taxon>Saccharomycetes</taxon>
        <taxon>Saccharomycetales</taxon>
        <taxon>Saccharomycetaceae</taxon>
        <taxon>Saccharomyces</taxon>
    </lineage>
</organism>
<name>STT4_YEAST</name>
<evidence type="ECO:0000250" key="1"/>
<evidence type="ECO:0000255" key="2">
    <source>
        <dbReference type="PROSITE-ProRule" id="PRU00269"/>
    </source>
</evidence>
<evidence type="ECO:0000255" key="3">
    <source>
        <dbReference type="PROSITE-ProRule" id="PRU00878"/>
    </source>
</evidence>
<evidence type="ECO:0000269" key="4">
    <source>
    </source>
</evidence>
<evidence type="ECO:0000305" key="5"/>
<evidence type="ECO:0007744" key="6">
    <source>
    </source>
</evidence>
<dbReference type="EC" id="2.7.1.67"/>
<dbReference type="EMBL" id="D13717">
    <property type="protein sequence ID" value="BAA02870.1"/>
    <property type="molecule type" value="Genomic_DNA"/>
</dbReference>
<dbReference type="EMBL" id="U17247">
    <property type="protein sequence ID" value="AAB67358.1"/>
    <property type="molecule type" value="Genomic_DNA"/>
</dbReference>
<dbReference type="EMBL" id="U17243">
    <property type="protein sequence ID" value="AAB67354.1"/>
    <property type="molecule type" value="Genomic_DNA"/>
</dbReference>
<dbReference type="EMBL" id="BK006945">
    <property type="protein sequence ID" value="DAA09614.1"/>
    <property type="molecule type" value="Genomic_DNA"/>
</dbReference>
<dbReference type="PIR" id="S45530">
    <property type="entry name" value="S45530"/>
</dbReference>
<dbReference type="RefSeq" id="NP_013408.1">
    <property type="nucleotide sequence ID" value="NM_001182193.1"/>
</dbReference>
<dbReference type="SMR" id="P37297"/>
<dbReference type="BioGRID" id="31570">
    <property type="interactions" value="284"/>
</dbReference>
<dbReference type="DIP" id="DIP-1677N"/>
<dbReference type="FunCoup" id="P37297">
    <property type="interactions" value="1085"/>
</dbReference>
<dbReference type="IntAct" id="P37297">
    <property type="interactions" value="14"/>
</dbReference>
<dbReference type="MINT" id="P37297"/>
<dbReference type="STRING" id="4932.YLR305C"/>
<dbReference type="CarbonylDB" id="P37297"/>
<dbReference type="iPTMnet" id="P37297"/>
<dbReference type="PaxDb" id="4932-YLR305C"/>
<dbReference type="PeptideAtlas" id="P37297"/>
<dbReference type="EnsemblFungi" id="YLR305C_mRNA">
    <property type="protein sequence ID" value="YLR305C"/>
    <property type="gene ID" value="YLR305C"/>
</dbReference>
<dbReference type="GeneID" id="851014"/>
<dbReference type="KEGG" id="sce:YLR305C"/>
<dbReference type="AGR" id="SGD:S000004296"/>
<dbReference type="SGD" id="S000004296">
    <property type="gene designation" value="STT4"/>
</dbReference>
<dbReference type="VEuPathDB" id="FungiDB:YLR305C"/>
<dbReference type="eggNOG" id="KOG0902">
    <property type="taxonomic scope" value="Eukaryota"/>
</dbReference>
<dbReference type="GeneTree" id="ENSGT00550000074798"/>
<dbReference type="HOGENOM" id="CLU_000893_1_1_1"/>
<dbReference type="InParanoid" id="P37297"/>
<dbReference type="OMA" id="TIEVWQS"/>
<dbReference type="OrthoDB" id="10264149at2759"/>
<dbReference type="BioCyc" id="YEAST:MONOMER3O-365"/>
<dbReference type="Reactome" id="R-SCE-1483248">
    <property type="pathway name" value="Synthesis of PIPs at the ER membrane"/>
</dbReference>
<dbReference type="Reactome" id="R-SCE-1660514">
    <property type="pathway name" value="Synthesis of PIPs at the Golgi membrane"/>
</dbReference>
<dbReference type="BioGRID-ORCS" id="851014">
    <property type="hits" value="0 hits in 10 CRISPR screens"/>
</dbReference>
<dbReference type="PRO" id="PR:P37297"/>
<dbReference type="Proteomes" id="UP000002311">
    <property type="component" value="Chromosome XII"/>
</dbReference>
<dbReference type="RNAct" id="P37297">
    <property type="molecule type" value="protein"/>
</dbReference>
<dbReference type="GO" id="GO:0005737">
    <property type="term" value="C:cytoplasm"/>
    <property type="evidence" value="ECO:0000318"/>
    <property type="project" value="GO_Central"/>
</dbReference>
<dbReference type="GO" id="GO:0005739">
    <property type="term" value="C:mitochondrion"/>
    <property type="evidence" value="ECO:0007005"/>
    <property type="project" value="SGD"/>
</dbReference>
<dbReference type="GO" id="GO:0005886">
    <property type="term" value="C:plasma membrane"/>
    <property type="evidence" value="ECO:0000314"/>
    <property type="project" value="SGD"/>
</dbReference>
<dbReference type="GO" id="GO:0004430">
    <property type="term" value="F:1-phosphatidylinositol 4-kinase activity"/>
    <property type="evidence" value="ECO:0000314"/>
    <property type="project" value="SGD"/>
</dbReference>
<dbReference type="GO" id="GO:0005524">
    <property type="term" value="F:ATP binding"/>
    <property type="evidence" value="ECO:0007669"/>
    <property type="project" value="UniProtKB-KW"/>
</dbReference>
<dbReference type="GO" id="GO:0061909">
    <property type="term" value="P:autophagosome-lysosome fusion"/>
    <property type="evidence" value="ECO:0000315"/>
    <property type="project" value="SGD"/>
</dbReference>
<dbReference type="GO" id="GO:0000422">
    <property type="term" value="P:autophagy of mitochondrion"/>
    <property type="evidence" value="ECO:0000315"/>
    <property type="project" value="SGD"/>
</dbReference>
<dbReference type="GO" id="GO:0006995">
    <property type="term" value="P:cellular response to nitrogen starvation"/>
    <property type="evidence" value="ECO:0000315"/>
    <property type="project" value="SGD"/>
</dbReference>
<dbReference type="GO" id="GO:0030866">
    <property type="term" value="P:cortical actin cytoskeleton organization"/>
    <property type="evidence" value="ECO:0000315"/>
    <property type="project" value="CACAO"/>
</dbReference>
<dbReference type="GO" id="GO:0016236">
    <property type="term" value="P:macroautophagy"/>
    <property type="evidence" value="ECO:0000315"/>
    <property type="project" value="SGD"/>
</dbReference>
<dbReference type="GO" id="GO:0140504">
    <property type="term" value="P:microlipophagy"/>
    <property type="evidence" value="ECO:0000315"/>
    <property type="project" value="SGD"/>
</dbReference>
<dbReference type="GO" id="GO:0046854">
    <property type="term" value="P:phosphatidylinositol phosphate biosynthetic process"/>
    <property type="evidence" value="ECO:0000314"/>
    <property type="project" value="SGD"/>
</dbReference>
<dbReference type="GO" id="GO:0048015">
    <property type="term" value="P:phosphatidylinositol-mediated signaling"/>
    <property type="evidence" value="ECO:0000318"/>
    <property type="project" value="GO_Central"/>
</dbReference>
<dbReference type="GO" id="GO:0060237">
    <property type="term" value="P:regulation of fungal-type cell wall organization"/>
    <property type="evidence" value="ECO:0000315"/>
    <property type="project" value="CACAO"/>
</dbReference>
<dbReference type="CDD" id="cd05167">
    <property type="entry name" value="PI4Kc_III_alpha"/>
    <property type="match status" value="1"/>
</dbReference>
<dbReference type="FunFam" id="1.25.40.70:FF:000011">
    <property type="entry name" value="Phosphatidylinositol 4-kinase alpha"/>
    <property type="match status" value="1"/>
</dbReference>
<dbReference type="FunFam" id="3.30.1010.10:FF:000014">
    <property type="entry name" value="Phosphatidylinositol 4-kinase STT4"/>
    <property type="match status" value="1"/>
</dbReference>
<dbReference type="FunFam" id="1.10.1070.11:FF:000022">
    <property type="entry name" value="Phosphatidylinositol 4-kinase stt4"/>
    <property type="match status" value="1"/>
</dbReference>
<dbReference type="Gene3D" id="1.10.1070.11">
    <property type="entry name" value="Phosphatidylinositol 3-/4-kinase, catalytic domain"/>
    <property type="match status" value="1"/>
</dbReference>
<dbReference type="Gene3D" id="3.30.1010.10">
    <property type="entry name" value="Phosphatidylinositol 3-kinase Catalytic Subunit, Chain A, domain 4"/>
    <property type="match status" value="1"/>
</dbReference>
<dbReference type="Gene3D" id="1.25.40.70">
    <property type="entry name" value="Phosphatidylinositol 3-kinase, accessory domain (PIK)"/>
    <property type="match status" value="1"/>
</dbReference>
<dbReference type="InterPro" id="IPR016024">
    <property type="entry name" value="ARM-type_fold"/>
</dbReference>
<dbReference type="InterPro" id="IPR011009">
    <property type="entry name" value="Kinase-like_dom_sf"/>
</dbReference>
<dbReference type="InterPro" id="IPR000403">
    <property type="entry name" value="PI3/4_kinase_cat_dom"/>
</dbReference>
<dbReference type="InterPro" id="IPR036940">
    <property type="entry name" value="PI3/4_kinase_cat_sf"/>
</dbReference>
<dbReference type="InterPro" id="IPR018936">
    <property type="entry name" value="PI3/4_kinase_CS"/>
</dbReference>
<dbReference type="InterPro" id="IPR001263">
    <property type="entry name" value="PI3K_accessory_dom"/>
</dbReference>
<dbReference type="InterPro" id="IPR042236">
    <property type="entry name" value="PI3K_accessory_sf"/>
</dbReference>
<dbReference type="InterPro" id="IPR045495">
    <property type="entry name" value="PI4K_N"/>
</dbReference>
<dbReference type="InterPro" id="IPR015433">
    <property type="entry name" value="PI_Kinase"/>
</dbReference>
<dbReference type="PANTHER" id="PTHR10048:SF15">
    <property type="entry name" value="PHOSPHATIDYLINOSITOL 4-KINASE ALPHA"/>
    <property type="match status" value="1"/>
</dbReference>
<dbReference type="PANTHER" id="PTHR10048">
    <property type="entry name" value="PHOSPHATIDYLINOSITOL KINASE"/>
    <property type="match status" value="1"/>
</dbReference>
<dbReference type="Pfam" id="PF00454">
    <property type="entry name" value="PI3_PI4_kinase"/>
    <property type="match status" value="1"/>
</dbReference>
<dbReference type="Pfam" id="PF00613">
    <property type="entry name" value="PI3Ka"/>
    <property type="match status" value="1"/>
</dbReference>
<dbReference type="Pfam" id="PF19274">
    <property type="entry name" value="PI4K_N"/>
    <property type="match status" value="1"/>
</dbReference>
<dbReference type="SMART" id="SM00145">
    <property type="entry name" value="PI3Ka"/>
    <property type="match status" value="1"/>
</dbReference>
<dbReference type="SMART" id="SM00146">
    <property type="entry name" value="PI3Kc"/>
    <property type="match status" value="1"/>
</dbReference>
<dbReference type="SUPFAM" id="SSF48371">
    <property type="entry name" value="ARM repeat"/>
    <property type="match status" value="1"/>
</dbReference>
<dbReference type="SUPFAM" id="SSF56112">
    <property type="entry name" value="Protein kinase-like (PK-like)"/>
    <property type="match status" value="1"/>
</dbReference>
<dbReference type="PROSITE" id="PS00915">
    <property type="entry name" value="PI3_4_KINASE_1"/>
    <property type="match status" value="1"/>
</dbReference>
<dbReference type="PROSITE" id="PS00916">
    <property type="entry name" value="PI3_4_KINASE_2"/>
    <property type="match status" value="1"/>
</dbReference>
<dbReference type="PROSITE" id="PS50290">
    <property type="entry name" value="PI3_4_KINASE_3"/>
    <property type="match status" value="1"/>
</dbReference>
<dbReference type="PROSITE" id="PS51545">
    <property type="entry name" value="PIK_HELICAL"/>
    <property type="match status" value="1"/>
</dbReference>
<protein>
    <recommendedName>
        <fullName>Phosphatidylinositol 4-kinase STT4</fullName>
        <shortName>PI4-kinase</shortName>
        <shortName>PtdIns-4-kinase</shortName>
        <ecNumber>2.7.1.67</ecNumber>
    </recommendedName>
</protein>
<sequence length="1900" mass="214607">MRFTRGLKASSSLRAKAIGRLTKLSTGAPNDQNSNGTTLDLITHTLPIFYSTNTSKIYTIPLTLSEWEVLTSLCVAIPTTLDLVETMLKEIIAPYFLETPRQRISDVLSSKFKLEQMRNPIELLTFQLTKFMIQACEQYPVLYENIGGIISTYFERVLKIFTIKQSGLLSLVGFINAFIQFPNSTELTKFTWKKLAKLVLRGSFLNEVDKILNSSATFTNDSIVQYYDAGNELSSAYLLELISRLQVSLISHLLNTSHVGANLSEFLLNQQYQFYKFDQEVADENDDTKCIDDFFFNVRSNKQFFTDMCKISLQFCSESHILDLSTDNRARFSFDTRAHYLQTLCLIPFIEDTESELFESFTNVVSESIDKFFLSDVVTPSLIKAIVASASLLNFFTEKLSLTLIRMFPLLVASPHITTETVNDVAKIFTTGLYPLNEDAIVSTIYSMNNLLAVSEDGSPVPVLRERQLTITSGKNIEKDYFPLRNSSASLDGTGALLGNTTVGQLSSHDVNSGATMTYHASLISNCVAATTTIASYYNTQSITALTISILTQKVNSMSKELDGVILNSLARLAPNTSLTEFSLLLKFFKSRTVIATKIDDSALLKNIIKAKCVISKELLARHFSSDLYFMYLHDLLDSIIASGEVERLEHHRPQTEISRVADQIATYLEPLAALLPVPGDTPLDINKDEVTTNKFRNAWFNFVIHGYHLGGPIVKRNFSFLLTIAYNSPPLASEFPANNKELSLEMNTILRRGSSNENIKQQKQQITEYFNTNIVQYRTTSSSKIMFLAAAVLLETIRCEAGDCSKTLLYFSDPSILSGSIEKCIAVLSVSMIRKYARLIQKGNDAIFNSKMIAQQLNNLLLCLSHREPTLQDAAFHACEIFIRSIPSSLCHHLSLYTLLDMLTALFDSILDSEAHKFEPRYEFKLKHSKTTILVPSSSSWRATTLSRLHKSAKEWVRILLNRSNQDTKILLQSYISDLGEYSRLNSVEFGVSFAMDMAGLILPADKELSRLTYYGPEKPNTISGFISLHSWRSKYLFDTAITSSPEDIKRQIGISTQNIRKNLTLGNKIITKDVTDFLDMATALLILGNGAPASLIYDIVHIPFEVFTSASLKIATNVWLTIITEKPEVAHLLLVEVCYCWMRSIDDNIGLYSRDHDLKGEEYQKMEYSPYDKAGINRDAKNASQAMQPHLHVIKFFASHFEGTLFQSDFLLKIFTKCALYGIKNLYKASLHPFARMIRHELLLFATLVLNASYKQGSKYMGRLSQEITNGALSWFKRPVAWPFGSNELKIKADLSVTRDLFLQLNKLSSLMSRHCGKDYKILNYFLASEIQQIQTWLTPTEKIEGADSNELTSDIVEATFAKDPTLAINLLQRCYSKKAEDVLVGLVAKHALMCVGSPSALDLFIKGSHLSSKKDLHATLYWAPVSPLKSINLFLPEWQGNSFILQFSIYSLESQDVNLAFFYVPQIVQCLRYDKTGYVERLILDTAKISVLFSHQIIWNMLANCYKDDEGIQEDEIKPTLDRIRERMVSSFSQSHRDFYEREFEFFDEVTGISGKLKPYIKKSKAEKKHKIDEEMSKIEVKPDVYLPSNPDGVVIDIDRKSGKPLQSHAKAPFMATFKIKKDVKDPLTGKNKEVEKWQAAIFKVGDDCRQDVLALQLISLFRTIWSSIGLDVYVFPYRVTATAPGCGVIDVLPNSVSRDMLGREAVNGLYEYFTSKFGNESTIEFQNARNNFVKSLAGYSVISYLLQFKDRHNGNIMYDDQGHCLHIDFGFIFDIVPGGIKFEAVPFKLTKEMVKVMGGSPQTPAYLDFEELCIKAYLAARPHVEAIIECVNPMLGSGLPCFKGHKTIRNLRARFQPQKTDHEAALYMKALIRKSYESIFTKGYDEFQRLTNGIPY</sequence>
<comment type="function">
    <text>Acts on phosphatidylinositol (PI) in the first committed step in the production of the second messenger inositol 1,4,5,-trisphosphate. STT4 functions in PKC1 protein kinase pathway.</text>
</comment>
<comment type="catalytic activity">
    <reaction>
        <text>a 1,2-diacyl-sn-glycero-3-phospho-(1D-myo-inositol) + ATP = a 1,2-diacyl-sn-glycero-3-phospho-(1D-myo-inositol 4-phosphate) + ADP + H(+)</text>
        <dbReference type="Rhea" id="RHEA:19877"/>
        <dbReference type="ChEBI" id="CHEBI:15378"/>
        <dbReference type="ChEBI" id="CHEBI:30616"/>
        <dbReference type="ChEBI" id="CHEBI:57880"/>
        <dbReference type="ChEBI" id="CHEBI:58178"/>
        <dbReference type="ChEBI" id="CHEBI:456216"/>
        <dbReference type="EC" id="2.7.1.67"/>
    </reaction>
</comment>
<comment type="interaction">
    <interactant intactId="EBI-18454">
        <id>P37297</id>
    </interactant>
    <interactant intactId="EBI-27465">
        <id>Q03653</id>
        <label>EFR3</label>
    </interactant>
    <organismsDiffer>false</organismsDiffer>
    <experiments>2</experiments>
</comment>
<comment type="interaction">
    <interactant intactId="EBI-18454">
        <id>P37297</id>
    </interactant>
    <interactant intactId="EBI-23455">
        <id>P46951</id>
        <label>YPP1</label>
    </interactant>
    <organismsDiffer>false</organismsDiffer>
    <experiments>3</experiments>
</comment>
<comment type="miscellaneous">
    <text evidence="4">Present with 846 molecules/cell in log phase SD medium.</text>
</comment>
<comment type="similarity">
    <text evidence="5">Belongs to the PI3/PI4-kinase family. Type III PI4K subfamily.</text>
</comment>
<proteinExistence type="evidence at protein level"/>
<keyword id="KW-0067">ATP-binding</keyword>
<keyword id="KW-0418">Kinase</keyword>
<keyword id="KW-0547">Nucleotide-binding</keyword>
<keyword id="KW-0597">Phosphoprotein</keyword>
<keyword id="KW-1185">Reference proteome</keyword>
<keyword id="KW-0808">Transferase</keyword>
<accession>P37297</accession>
<accession>D6VYU8</accession>
<reference key="1">
    <citation type="journal article" date="1994" name="J. Biol. Chem.">
        <title>A novel gene, STT4, encodes a phosphatidylinositol 4-kinase in the PKC1 protein kinase pathway of Saccharomyces cerevisiae.</title>
        <authorList>
            <person name="Yoshida S."/>
            <person name="Goebl M."/>
            <person name="Ohya Y."/>
            <person name="Nakano A."/>
            <person name="Anraku Y."/>
        </authorList>
    </citation>
    <scope>NUCLEOTIDE SEQUENCE [GENOMIC DNA]</scope>
    <source>
        <strain>ATCC 204508 / S288c</strain>
    </source>
</reference>
<reference key="2">
    <citation type="journal article" date="1997" name="Nature">
        <title>The nucleotide sequence of Saccharomyces cerevisiae chromosome XII.</title>
        <authorList>
            <person name="Johnston M."/>
            <person name="Hillier L.W."/>
            <person name="Riles L."/>
            <person name="Albermann K."/>
            <person name="Andre B."/>
            <person name="Ansorge W."/>
            <person name="Benes V."/>
            <person name="Brueckner M."/>
            <person name="Delius H."/>
            <person name="Dubois E."/>
            <person name="Duesterhoeft A."/>
            <person name="Entian K.-D."/>
            <person name="Floeth M."/>
            <person name="Goffeau A."/>
            <person name="Hebling U."/>
            <person name="Heumann K."/>
            <person name="Heuss-Neitzel D."/>
            <person name="Hilbert H."/>
            <person name="Hilger F."/>
            <person name="Kleine K."/>
            <person name="Koetter P."/>
            <person name="Louis E.J."/>
            <person name="Messenguy F."/>
            <person name="Mewes H.-W."/>
            <person name="Miosga T."/>
            <person name="Moestl D."/>
            <person name="Mueller-Auer S."/>
            <person name="Nentwich U."/>
            <person name="Obermaier B."/>
            <person name="Piravandi E."/>
            <person name="Pohl T.M."/>
            <person name="Portetelle D."/>
            <person name="Purnelle B."/>
            <person name="Rechmann S."/>
            <person name="Rieger M."/>
            <person name="Rinke M."/>
            <person name="Rose M."/>
            <person name="Scharfe M."/>
            <person name="Scherens B."/>
            <person name="Scholler P."/>
            <person name="Schwager C."/>
            <person name="Schwarz S."/>
            <person name="Underwood A.P."/>
            <person name="Urrestarazu L.A."/>
            <person name="Vandenbol M."/>
            <person name="Verhasselt P."/>
            <person name="Vierendeels F."/>
            <person name="Voet M."/>
            <person name="Volckaert G."/>
            <person name="Voss H."/>
            <person name="Wambutt R."/>
            <person name="Wedler E."/>
            <person name="Wedler H."/>
            <person name="Zimmermann F.K."/>
            <person name="Zollner A."/>
            <person name="Hani J."/>
            <person name="Hoheisel J.D."/>
        </authorList>
    </citation>
    <scope>NUCLEOTIDE SEQUENCE [LARGE SCALE GENOMIC DNA]</scope>
    <source>
        <strain>ATCC 204508 / S288c</strain>
    </source>
</reference>
<reference key="3">
    <citation type="journal article" date="2014" name="G3 (Bethesda)">
        <title>The reference genome sequence of Saccharomyces cerevisiae: Then and now.</title>
        <authorList>
            <person name="Engel S.R."/>
            <person name="Dietrich F.S."/>
            <person name="Fisk D.G."/>
            <person name="Binkley G."/>
            <person name="Balakrishnan R."/>
            <person name="Costanzo M.C."/>
            <person name="Dwight S.S."/>
            <person name="Hitz B.C."/>
            <person name="Karra K."/>
            <person name="Nash R.S."/>
            <person name="Weng S."/>
            <person name="Wong E.D."/>
            <person name="Lloyd P."/>
            <person name="Skrzypek M.S."/>
            <person name="Miyasato S.R."/>
            <person name="Simison M."/>
            <person name="Cherry J.M."/>
        </authorList>
    </citation>
    <scope>GENOME REANNOTATION</scope>
    <source>
        <strain>ATCC 204508 / S288c</strain>
    </source>
</reference>
<reference key="4">
    <citation type="journal article" date="2003" name="Mol. Cell">
        <title>Assigning function to yeast proteins by integration of technologies.</title>
        <authorList>
            <person name="Hazbun T.R."/>
            <person name="Malmstroem L."/>
            <person name="Anderson S."/>
            <person name="Graczyk B.J."/>
            <person name="Fox B."/>
            <person name="Riffle M."/>
            <person name="Sundin B.A."/>
            <person name="Aranda J.D."/>
            <person name="McDonald W.H."/>
            <person name="Chiu C.-H."/>
            <person name="Snydsman B.E."/>
            <person name="Bradley P."/>
            <person name="Muller E.G.D."/>
            <person name="Fields S."/>
            <person name="Baker D."/>
            <person name="Yates J.R. III"/>
            <person name="Davis T.N."/>
        </authorList>
    </citation>
    <scope>IDENTIFICATION BY MASS SPECTROMETRY</scope>
</reference>
<reference key="5">
    <citation type="journal article" date="2003" name="Nature">
        <title>Global analysis of protein expression in yeast.</title>
        <authorList>
            <person name="Ghaemmaghami S."/>
            <person name="Huh W.-K."/>
            <person name="Bower K."/>
            <person name="Howson R.W."/>
            <person name="Belle A."/>
            <person name="Dephoure N."/>
            <person name="O'Shea E.K."/>
            <person name="Weissman J.S."/>
        </authorList>
    </citation>
    <scope>LEVEL OF PROTEIN EXPRESSION [LARGE SCALE ANALYSIS]</scope>
</reference>
<reference key="6">
    <citation type="journal article" date="2008" name="Mol. Cell. Proteomics">
        <title>A multidimensional chromatography technology for in-depth phosphoproteome analysis.</title>
        <authorList>
            <person name="Albuquerque C.P."/>
            <person name="Smolka M.B."/>
            <person name="Payne S.H."/>
            <person name="Bafna V."/>
            <person name="Eng J."/>
            <person name="Zhou H."/>
        </authorList>
    </citation>
    <scope>PHOSPHORYLATION [LARGE SCALE ANALYSIS] AT SER-459</scope>
    <scope>IDENTIFICATION BY MASS SPECTROMETRY [LARGE SCALE ANALYSIS]</scope>
</reference>
<feature type="chain" id="PRO_0000088835" description="Phosphatidylinositol 4-kinase STT4">
    <location>
        <begin position="1"/>
        <end position="1900"/>
    </location>
</feature>
<feature type="domain" description="PIK helical" evidence="3">
    <location>
        <begin position="1345"/>
        <end position="1530"/>
    </location>
</feature>
<feature type="domain" description="PI3K/PI4K catalytic" evidence="2">
    <location>
        <begin position="1617"/>
        <end position="1884"/>
    </location>
</feature>
<feature type="region of interest" description="Pleckstrin homology (PH) domain conferring phosphoinositide binding specificity" evidence="1">
    <location>
        <begin position="1531"/>
        <end position="1648"/>
    </location>
</feature>
<feature type="region of interest" description="G-loop" evidence="2">
    <location>
        <begin position="1623"/>
        <end position="1629"/>
    </location>
</feature>
<feature type="region of interest" description="Catalytic loop" evidence="2">
    <location>
        <begin position="1751"/>
        <end position="1759"/>
    </location>
</feature>
<feature type="region of interest" description="Activation loop" evidence="2">
    <location>
        <begin position="1770"/>
        <end position="1794"/>
    </location>
</feature>
<feature type="modified residue" description="Phosphoserine" evidence="6">
    <location>
        <position position="459"/>
    </location>
</feature>
<gene>
    <name type="primary">STT4</name>
    <name type="ordered locus">YLR305C</name>
    <name type="ORF">L2142.4</name>
</gene>